<comment type="function">
    <text evidence="1">Involved in transcription antitermination. Required for transcription of ribosomal RNA (rRNA) genes. Binds specifically to the boxA antiterminator sequence of the ribosomal RNA (rrn) operons.</text>
</comment>
<comment type="similarity">
    <text evidence="1">Belongs to the NusB family.</text>
</comment>
<proteinExistence type="inferred from homology"/>
<name>NUSB_HELHP</name>
<reference key="1">
    <citation type="journal article" date="2003" name="Proc. Natl. Acad. Sci. U.S.A.">
        <title>The complete genome sequence of the carcinogenic bacterium Helicobacter hepaticus.</title>
        <authorList>
            <person name="Suerbaum S."/>
            <person name="Josenhans C."/>
            <person name="Sterzenbach T."/>
            <person name="Drescher B."/>
            <person name="Brandt P."/>
            <person name="Bell M."/>
            <person name="Droege M."/>
            <person name="Fartmann B."/>
            <person name="Fischer H.-P."/>
            <person name="Ge Z."/>
            <person name="Hoerster A."/>
            <person name="Holland R."/>
            <person name="Klein K."/>
            <person name="Koenig J."/>
            <person name="Macko L."/>
            <person name="Mendz G.L."/>
            <person name="Nyakatura G."/>
            <person name="Schauer D.B."/>
            <person name="Shen Z."/>
            <person name="Weber J."/>
            <person name="Frosch M."/>
            <person name="Fox J.G."/>
        </authorList>
    </citation>
    <scope>NUCLEOTIDE SEQUENCE [LARGE SCALE GENOMIC DNA]</scope>
    <source>
        <strain>ATCC 51449 / 3B1</strain>
    </source>
</reference>
<keyword id="KW-1185">Reference proteome</keyword>
<keyword id="KW-0694">RNA-binding</keyword>
<keyword id="KW-0804">Transcription</keyword>
<keyword id="KW-0889">Transcription antitermination</keyword>
<keyword id="KW-0805">Transcription regulation</keyword>
<protein>
    <recommendedName>
        <fullName evidence="1">Transcription antitermination protein NusB</fullName>
    </recommendedName>
    <alternativeName>
        <fullName evidence="1">Antitermination factor NusB</fullName>
    </alternativeName>
</protein>
<organism>
    <name type="scientific">Helicobacter hepaticus (strain ATCC 51449 / 3B1)</name>
    <dbReference type="NCBI Taxonomy" id="235279"/>
    <lineage>
        <taxon>Bacteria</taxon>
        <taxon>Pseudomonadati</taxon>
        <taxon>Campylobacterota</taxon>
        <taxon>Epsilonproteobacteria</taxon>
        <taxon>Campylobacterales</taxon>
        <taxon>Helicobacteraceae</taxon>
        <taxon>Helicobacter</taxon>
    </lineage>
</organism>
<evidence type="ECO:0000255" key="1">
    <source>
        <dbReference type="HAMAP-Rule" id="MF_00073"/>
    </source>
</evidence>
<gene>
    <name evidence="1" type="primary">nusB</name>
    <name type="ordered locus">HH_0037</name>
</gene>
<dbReference type="EMBL" id="AE017125">
    <property type="protein sequence ID" value="AAP76634.1"/>
    <property type="molecule type" value="Genomic_DNA"/>
</dbReference>
<dbReference type="RefSeq" id="WP_011114880.1">
    <property type="nucleotide sequence ID" value="NC_004917.1"/>
</dbReference>
<dbReference type="SMR" id="Q7VK55"/>
<dbReference type="STRING" id="235279.HH_0037"/>
<dbReference type="KEGG" id="hhe:HH_0037"/>
<dbReference type="eggNOG" id="COG0781">
    <property type="taxonomic scope" value="Bacteria"/>
</dbReference>
<dbReference type="HOGENOM" id="CLU_087843_3_3_7"/>
<dbReference type="OrthoDB" id="9797817at2"/>
<dbReference type="Proteomes" id="UP000002495">
    <property type="component" value="Chromosome"/>
</dbReference>
<dbReference type="GO" id="GO:0005829">
    <property type="term" value="C:cytosol"/>
    <property type="evidence" value="ECO:0007669"/>
    <property type="project" value="TreeGrafter"/>
</dbReference>
<dbReference type="GO" id="GO:0003723">
    <property type="term" value="F:RNA binding"/>
    <property type="evidence" value="ECO:0007669"/>
    <property type="project" value="UniProtKB-UniRule"/>
</dbReference>
<dbReference type="GO" id="GO:0006353">
    <property type="term" value="P:DNA-templated transcription termination"/>
    <property type="evidence" value="ECO:0007669"/>
    <property type="project" value="UniProtKB-UniRule"/>
</dbReference>
<dbReference type="GO" id="GO:0031564">
    <property type="term" value="P:transcription antitermination"/>
    <property type="evidence" value="ECO:0007669"/>
    <property type="project" value="UniProtKB-KW"/>
</dbReference>
<dbReference type="CDD" id="cd00619">
    <property type="entry name" value="Terminator_NusB"/>
    <property type="match status" value="1"/>
</dbReference>
<dbReference type="Gene3D" id="1.10.940.10">
    <property type="entry name" value="NusB-like"/>
    <property type="match status" value="1"/>
</dbReference>
<dbReference type="HAMAP" id="MF_00073">
    <property type="entry name" value="NusB"/>
    <property type="match status" value="1"/>
</dbReference>
<dbReference type="InterPro" id="IPR035926">
    <property type="entry name" value="NusB-like_sf"/>
</dbReference>
<dbReference type="InterPro" id="IPR011605">
    <property type="entry name" value="NusB_fam"/>
</dbReference>
<dbReference type="InterPro" id="IPR006027">
    <property type="entry name" value="NusB_RsmB_TIM44"/>
</dbReference>
<dbReference type="NCBIfam" id="TIGR01951">
    <property type="entry name" value="nusB"/>
    <property type="match status" value="1"/>
</dbReference>
<dbReference type="PANTHER" id="PTHR11078:SF3">
    <property type="entry name" value="ANTITERMINATION NUSB DOMAIN-CONTAINING PROTEIN"/>
    <property type="match status" value="1"/>
</dbReference>
<dbReference type="PANTHER" id="PTHR11078">
    <property type="entry name" value="N UTILIZATION SUBSTANCE PROTEIN B-RELATED"/>
    <property type="match status" value="1"/>
</dbReference>
<dbReference type="Pfam" id="PF01029">
    <property type="entry name" value="NusB"/>
    <property type="match status" value="1"/>
</dbReference>
<dbReference type="SUPFAM" id="SSF48013">
    <property type="entry name" value="NusB-like"/>
    <property type="match status" value="1"/>
</dbReference>
<sequence>MATRTQAREAVIGMLYAYDLGNESIIEIARSMLEEKKIKNKQQDFAFSLLQGVIEHLSQIDLCIAPYLKEWEFSRLGGMERAMLRLGAFEILYTETDTPVIINEAVELGKMYGGEDNAPRFINGVLDALSKAHTKNKKSEDCSKTQDIINDALGKES</sequence>
<accession>Q7VK55</accession>
<feature type="chain" id="PRO_0000176544" description="Transcription antitermination protein NusB">
    <location>
        <begin position="1"/>
        <end position="157"/>
    </location>
</feature>